<protein>
    <recommendedName>
        <fullName evidence="1">N-acetyldiaminopimelate deacetylase</fullName>
        <ecNumber evidence="1">3.5.1.47</ecNumber>
    </recommendedName>
</protein>
<proteinExistence type="inferred from homology"/>
<evidence type="ECO:0000255" key="1">
    <source>
        <dbReference type="HAMAP-Rule" id="MF_01692"/>
    </source>
</evidence>
<evidence type="ECO:0000305" key="2"/>
<dbReference type="EC" id="3.5.1.47" evidence="1"/>
<dbReference type="EMBL" id="CP000922">
    <property type="protein sequence ID" value="ACJ34264.1"/>
    <property type="status" value="ALT_INIT"/>
    <property type="molecule type" value="Genomic_DNA"/>
</dbReference>
<dbReference type="RefSeq" id="WP_041638622.1">
    <property type="nucleotide sequence ID" value="NC_011567.1"/>
</dbReference>
<dbReference type="SMR" id="B7GIC0"/>
<dbReference type="STRING" id="491915.Aflv_1903"/>
<dbReference type="MEROPS" id="M20.A27"/>
<dbReference type="GeneID" id="7038156"/>
<dbReference type="KEGG" id="afl:Aflv_1903"/>
<dbReference type="PATRIC" id="fig|491915.6.peg.1957"/>
<dbReference type="eggNOG" id="COG1473">
    <property type="taxonomic scope" value="Bacteria"/>
</dbReference>
<dbReference type="HOGENOM" id="CLU_023257_0_1_9"/>
<dbReference type="UniPathway" id="UPA00034">
    <property type="reaction ID" value="UER00024"/>
</dbReference>
<dbReference type="Proteomes" id="UP000000742">
    <property type="component" value="Chromosome"/>
</dbReference>
<dbReference type="GO" id="GO:0050118">
    <property type="term" value="F:N-acetyldiaminopimelate deacetylase activity"/>
    <property type="evidence" value="ECO:0007669"/>
    <property type="project" value="UniProtKB-UniRule"/>
</dbReference>
<dbReference type="GO" id="GO:0019877">
    <property type="term" value="P:diaminopimelate biosynthetic process"/>
    <property type="evidence" value="ECO:0007669"/>
    <property type="project" value="UniProtKB-UniRule"/>
</dbReference>
<dbReference type="GO" id="GO:0009089">
    <property type="term" value="P:lysine biosynthetic process via diaminopimelate"/>
    <property type="evidence" value="ECO:0007669"/>
    <property type="project" value="UniProtKB-UniRule"/>
</dbReference>
<dbReference type="CDD" id="cd05670">
    <property type="entry name" value="M20_Acy1_YkuR-like"/>
    <property type="match status" value="1"/>
</dbReference>
<dbReference type="FunFam" id="3.30.70.360:FF:000001">
    <property type="entry name" value="N-acetyldiaminopimelate deacetylase"/>
    <property type="match status" value="1"/>
</dbReference>
<dbReference type="Gene3D" id="3.30.70.360">
    <property type="match status" value="1"/>
</dbReference>
<dbReference type="Gene3D" id="3.40.630.10">
    <property type="entry name" value="Zn peptidases"/>
    <property type="match status" value="1"/>
</dbReference>
<dbReference type="HAMAP" id="MF_01692">
    <property type="entry name" value="DapEL"/>
    <property type="match status" value="1"/>
</dbReference>
<dbReference type="InterPro" id="IPR023905">
    <property type="entry name" value="AcetylDAP_deacetylase"/>
</dbReference>
<dbReference type="InterPro" id="IPR017439">
    <property type="entry name" value="Amidohydrolase"/>
</dbReference>
<dbReference type="InterPro" id="IPR036264">
    <property type="entry name" value="Bact_exopeptidase_dim_dom"/>
</dbReference>
<dbReference type="InterPro" id="IPR002933">
    <property type="entry name" value="Peptidase_M20"/>
</dbReference>
<dbReference type="InterPro" id="IPR011650">
    <property type="entry name" value="Peptidase_M20_dimer"/>
</dbReference>
<dbReference type="NCBIfam" id="TIGR01891">
    <property type="entry name" value="amidohydrolases"/>
    <property type="match status" value="1"/>
</dbReference>
<dbReference type="PANTHER" id="PTHR11014:SF98">
    <property type="entry name" value="N-ACETYLDIAMINOPIMELATE DEACETYLASE"/>
    <property type="match status" value="1"/>
</dbReference>
<dbReference type="PANTHER" id="PTHR11014">
    <property type="entry name" value="PEPTIDASE M20 FAMILY MEMBER"/>
    <property type="match status" value="1"/>
</dbReference>
<dbReference type="Pfam" id="PF07687">
    <property type="entry name" value="M20_dimer"/>
    <property type="match status" value="1"/>
</dbReference>
<dbReference type="Pfam" id="PF01546">
    <property type="entry name" value="Peptidase_M20"/>
    <property type="match status" value="1"/>
</dbReference>
<dbReference type="PIRSF" id="PIRSF005962">
    <property type="entry name" value="Pept_M20D_amidohydro"/>
    <property type="match status" value="1"/>
</dbReference>
<dbReference type="SUPFAM" id="SSF55031">
    <property type="entry name" value="Bacterial exopeptidase dimerisation domain"/>
    <property type="match status" value="1"/>
</dbReference>
<dbReference type="SUPFAM" id="SSF53187">
    <property type="entry name" value="Zn-dependent exopeptidases"/>
    <property type="match status" value="1"/>
</dbReference>
<organism>
    <name type="scientific">Anoxybacillus flavithermus (strain DSM 21510 / WK1)</name>
    <dbReference type="NCBI Taxonomy" id="491915"/>
    <lineage>
        <taxon>Bacteria</taxon>
        <taxon>Bacillati</taxon>
        <taxon>Bacillota</taxon>
        <taxon>Bacilli</taxon>
        <taxon>Bacillales</taxon>
        <taxon>Anoxybacillaceae</taxon>
        <taxon>Anoxybacillus</taxon>
    </lineage>
</organism>
<sequence length="378" mass="42584">MFVNIRRDLHQIPELGFQEFKTQQYILDYLATLPSERLQIKTWRTGILVRVHGTAPTKTIGYRADMDGLPIDEQTDVPFRSTHEGRMHACGHDMHMAIALGVLTHVVHHPIRDDMLFIFQPAEEGPGGALPMLESDEMKQWMPDMILALHIAPAYPVGTIATKEGLLFANTSELFIDLIGKGGHAAFPHETKDMVVAASSLIMQLQTIVSRNVNPLDSAVITIGKLTSGTVQNVIAERARLEGTIRTLSPEAMEKVKGRIEAIVRGIEVAYDCQAHIDYGSMYYQVYNDETLTNEFMQFVEKETDVHLVRCQEAMTGEDFGYMLARIPGFMFWLGVQSPFGLHHAKLNPNEEAIDVAIQLLTRYVTWKGNHKVKEEER</sequence>
<comment type="function">
    <text evidence="1">Catalyzes the conversion of N-acetyl-diaminopimelate to diaminopimelate and acetate.</text>
</comment>
<comment type="catalytic activity">
    <reaction evidence="1">
        <text>N-acetyl-(2S,6S)-2,6-diaminopimelate + H2O = (2S,6S)-2,6-diaminopimelate + acetate</text>
        <dbReference type="Rhea" id="RHEA:20405"/>
        <dbReference type="ChEBI" id="CHEBI:15377"/>
        <dbReference type="ChEBI" id="CHEBI:30089"/>
        <dbReference type="ChEBI" id="CHEBI:57609"/>
        <dbReference type="ChEBI" id="CHEBI:58767"/>
        <dbReference type="EC" id="3.5.1.47"/>
    </reaction>
</comment>
<comment type="pathway">
    <text evidence="1">Amino-acid biosynthesis; L-lysine biosynthesis via DAP pathway; LL-2,6-diaminopimelate from (S)-tetrahydrodipicolinate (acetylase route): step 3/3.</text>
</comment>
<comment type="similarity">
    <text evidence="1">Belongs to the peptidase M20A family. N-acetyldiaminopimelate deacetylase subfamily.</text>
</comment>
<comment type="sequence caution" evidence="2">
    <conflict type="erroneous initiation">
        <sequence resource="EMBL-CDS" id="ACJ34264"/>
    </conflict>
    <text>Extended N-terminus.</text>
</comment>
<gene>
    <name type="ordered locus">Aflv_1903</name>
</gene>
<feature type="chain" id="PRO_0000376734" description="N-acetyldiaminopimelate deacetylase">
    <location>
        <begin position="1"/>
        <end position="378"/>
    </location>
</feature>
<feature type="active site" evidence="1">
    <location>
        <position position="65"/>
    </location>
</feature>
<feature type="active site" description="Proton acceptor" evidence="1">
    <location>
        <position position="124"/>
    </location>
</feature>
<reference key="1">
    <citation type="journal article" date="2008" name="Genome Biol.">
        <title>Encapsulated in silica: genome, proteome and physiology of the thermophilic bacterium Anoxybacillus flavithermus WK1.</title>
        <authorList>
            <person name="Saw J.H."/>
            <person name="Mountain B.W."/>
            <person name="Feng L."/>
            <person name="Omelchenko M.V."/>
            <person name="Hou S."/>
            <person name="Saito J.A."/>
            <person name="Stott M.B."/>
            <person name="Li D."/>
            <person name="Zhao G."/>
            <person name="Wu J."/>
            <person name="Galperin M.Y."/>
            <person name="Koonin E.V."/>
            <person name="Makarova K.S."/>
            <person name="Wolf Y.I."/>
            <person name="Rigden D.J."/>
            <person name="Dunfield P.F."/>
            <person name="Wang L."/>
            <person name="Alam M."/>
        </authorList>
    </citation>
    <scope>NUCLEOTIDE SEQUENCE [LARGE SCALE GENOMIC DNA]</scope>
    <source>
        <strain>DSM 21510 / WK1</strain>
    </source>
</reference>
<keyword id="KW-0028">Amino-acid biosynthesis</keyword>
<keyword id="KW-0220">Diaminopimelate biosynthesis</keyword>
<keyword id="KW-0378">Hydrolase</keyword>
<keyword id="KW-0457">Lysine biosynthesis</keyword>
<accession>B7GIC0</accession>
<name>DAPEL_ANOFW</name>